<protein>
    <recommendedName>
        <fullName evidence="1">Large ribosomal subunit protein bL36B</fullName>
    </recommendedName>
    <alternativeName>
        <fullName evidence="2">50S ribosomal protein L36 2</fullName>
    </alternativeName>
</protein>
<proteinExistence type="inferred from homology"/>
<organism>
    <name type="scientific">Pseudomonas aeruginosa (strain ATCC 15692 / DSM 22644 / CIP 104116 / JCM 14847 / LMG 12228 / 1C / PRS 101 / PAO1)</name>
    <dbReference type="NCBI Taxonomy" id="208964"/>
    <lineage>
        <taxon>Bacteria</taxon>
        <taxon>Pseudomonadati</taxon>
        <taxon>Pseudomonadota</taxon>
        <taxon>Gammaproteobacteria</taxon>
        <taxon>Pseudomonadales</taxon>
        <taxon>Pseudomonadaceae</taxon>
        <taxon>Pseudomonas</taxon>
    </lineage>
</organism>
<sequence>MKVLASLKQAKLRHRDCQVVKRRGRLYVICKSNPRFKCVQGRPKPKIKRR</sequence>
<gene>
    <name evidence="1" type="primary">rpmJ2</name>
    <name type="ordered locus">PA3600</name>
</gene>
<comment type="similarity">
    <text evidence="1">Belongs to the bacterial ribosomal protein bL36 family.</text>
</comment>
<dbReference type="EMBL" id="AE004091">
    <property type="protein sequence ID" value="AAG06988.1"/>
    <property type="molecule type" value="Genomic_DNA"/>
</dbReference>
<dbReference type="PIR" id="B83196">
    <property type="entry name" value="B83196"/>
</dbReference>
<dbReference type="RefSeq" id="NP_252290.1">
    <property type="nucleotide sequence ID" value="NC_002516.2"/>
</dbReference>
<dbReference type="SMR" id="Q9HY26"/>
<dbReference type="FunCoup" id="Q9HY26">
    <property type="interactions" value="58"/>
</dbReference>
<dbReference type="STRING" id="208964.PA3600"/>
<dbReference type="PaxDb" id="208964-PA3600"/>
<dbReference type="DNASU" id="880142"/>
<dbReference type="GeneID" id="880142"/>
<dbReference type="KEGG" id="pae:PA3600"/>
<dbReference type="PATRIC" id="fig|208964.12.peg.3767"/>
<dbReference type="PseudoCAP" id="PA3600"/>
<dbReference type="HOGENOM" id="CLU_135723_3_1_6"/>
<dbReference type="InParanoid" id="Q9HY26"/>
<dbReference type="OrthoDB" id="9801558at2"/>
<dbReference type="PhylomeDB" id="Q9HY26"/>
<dbReference type="BioCyc" id="PAER208964:G1FZ6-3669-MONOMER"/>
<dbReference type="PRO" id="PR:Q9HY26"/>
<dbReference type="Proteomes" id="UP000002438">
    <property type="component" value="Chromosome"/>
</dbReference>
<dbReference type="GO" id="GO:1990904">
    <property type="term" value="C:ribonucleoprotein complex"/>
    <property type="evidence" value="ECO:0007669"/>
    <property type="project" value="UniProtKB-KW"/>
</dbReference>
<dbReference type="GO" id="GO:0005840">
    <property type="term" value="C:ribosome"/>
    <property type="evidence" value="ECO:0007669"/>
    <property type="project" value="UniProtKB-KW"/>
</dbReference>
<dbReference type="GO" id="GO:0003735">
    <property type="term" value="F:structural constituent of ribosome"/>
    <property type="evidence" value="ECO:0007669"/>
    <property type="project" value="InterPro"/>
</dbReference>
<dbReference type="GO" id="GO:0006412">
    <property type="term" value="P:translation"/>
    <property type="evidence" value="ECO:0007669"/>
    <property type="project" value="UniProtKB-UniRule"/>
</dbReference>
<dbReference type="HAMAP" id="MF_00251">
    <property type="entry name" value="Ribosomal_bL36"/>
    <property type="match status" value="1"/>
</dbReference>
<dbReference type="InterPro" id="IPR000473">
    <property type="entry name" value="Ribosomal_bL36"/>
</dbReference>
<dbReference type="InterPro" id="IPR035977">
    <property type="entry name" value="Ribosomal_bL36_sp"/>
</dbReference>
<dbReference type="InterPro" id="IPR047621">
    <property type="entry name" value="Ribosomal_L36_bact"/>
</dbReference>
<dbReference type="NCBIfam" id="NF002021">
    <property type="entry name" value="PRK00831.1"/>
    <property type="match status" value="1"/>
</dbReference>
<dbReference type="NCBIfam" id="TIGR01022">
    <property type="entry name" value="rpmJ_bact"/>
    <property type="match status" value="1"/>
</dbReference>
<dbReference type="PANTHER" id="PTHR47781">
    <property type="entry name" value="50S RIBOSOMAL PROTEIN L36 2"/>
    <property type="match status" value="1"/>
</dbReference>
<dbReference type="PANTHER" id="PTHR47781:SF1">
    <property type="entry name" value="LARGE RIBOSOMAL SUBUNIT PROTEIN BL36B"/>
    <property type="match status" value="1"/>
</dbReference>
<dbReference type="Pfam" id="PF00444">
    <property type="entry name" value="Ribosomal_L36"/>
    <property type="match status" value="1"/>
</dbReference>
<dbReference type="SUPFAM" id="SSF57840">
    <property type="entry name" value="Ribosomal protein L36"/>
    <property type="match status" value="1"/>
</dbReference>
<dbReference type="PROSITE" id="PS00828">
    <property type="entry name" value="RIBOSOMAL_L36"/>
    <property type="match status" value="1"/>
</dbReference>
<evidence type="ECO:0000255" key="1">
    <source>
        <dbReference type="HAMAP-Rule" id="MF_00251"/>
    </source>
</evidence>
<evidence type="ECO:0000305" key="2"/>
<accession>Q9HY26</accession>
<name>RL362_PSEAE</name>
<keyword id="KW-1185">Reference proteome</keyword>
<keyword id="KW-0687">Ribonucleoprotein</keyword>
<keyword id="KW-0689">Ribosomal protein</keyword>
<reference key="1">
    <citation type="journal article" date="2000" name="Nature">
        <title>Complete genome sequence of Pseudomonas aeruginosa PAO1, an opportunistic pathogen.</title>
        <authorList>
            <person name="Stover C.K."/>
            <person name="Pham X.-Q.T."/>
            <person name="Erwin A.L."/>
            <person name="Mizoguchi S.D."/>
            <person name="Warrener P."/>
            <person name="Hickey M.J."/>
            <person name="Brinkman F.S.L."/>
            <person name="Hufnagle W.O."/>
            <person name="Kowalik D.J."/>
            <person name="Lagrou M."/>
            <person name="Garber R.L."/>
            <person name="Goltry L."/>
            <person name="Tolentino E."/>
            <person name="Westbrock-Wadman S."/>
            <person name="Yuan Y."/>
            <person name="Brody L.L."/>
            <person name="Coulter S.N."/>
            <person name="Folger K.R."/>
            <person name="Kas A."/>
            <person name="Larbig K."/>
            <person name="Lim R.M."/>
            <person name="Smith K.A."/>
            <person name="Spencer D.H."/>
            <person name="Wong G.K.-S."/>
            <person name="Wu Z."/>
            <person name="Paulsen I.T."/>
            <person name="Reizer J."/>
            <person name="Saier M.H. Jr."/>
            <person name="Hancock R.E.W."/>
            <person name="Lory S."/>
            <person name="Olson M.V."/>
        </authorList>
    </citation>
    <scope>NUCLEOTIDE SEQUENCE [LARGE SCALE GENOMIC DNA]</scope>
    <source>
        <strain>ATCC 15692 / DSM 22644 / CIP 104116 / JCM 14847 / LMG 12228 / 1C / PRS 101 / PAO1</strain>
    </source>
</reference>
<feature type="chain" id="PRO_0000126240" description="Large ribosomal subunit protein bL36B">
    <location>
        <begin position="1"/>
        <end position="50"/>
    </location>
</feature>